<proteinExistence type="inferred from homology"/>
<keyword id="KW-1185">Reference proteome</keyword>
<keyword id="KW-0687">Ribonucleoprotein</keyword>
<keyword id="KW-0689">Ribosomal protein</keyword>
<keyword id="KW-0694">RNA-binding</keyword>
<keyword id="KW-0699">rRNA-binding</keyword>
<organism>
    <name type="scientific">Deinococcus deserti (strain DSM 17065 / CIP 109153 / LMG 22923 / VCD115)</name>
    <dbReference type="NCBI Taxonomy" id="546414"/>
    <lineage>
        <taxon>Bacteria</taxon>
        <taxon>Thermotogati</taxon>
        <taxon>Deinococcota</taxon>
        <taxon>Deinococci</taxon>
        <taxon>Deinococcales</taxon>
        <taxon>Deinococcaceae</taxon>
        <taxon>Deinococcus</taxon>
    </lineage>
</organism>
<gene>
    <name evidence="1" type="primary">rplN</name>
    <name type="ordered locus">Deide_18850</name>
</gene>
<evidence type="ECO:0000255" key="1">
    <source>
        <dbReference type="HAMAP-Rule" id="MF_01367"/>
    </source>
</evidence>
<evidence type="ECO:0000305" key="2"/>
<reference key="1">
    <citation type="journal article" date="2009" name="PLoS Genet.">
        <title>Alliance of proteomics and genomics to unravel the specificities of Sahara bacterium Deinococcus deserti.</title>
        <authorList>
            <person name="de Groot A."/>
            <person name="Dulermo R."/>
            <person name="Ortet P."/>
            <person name="Blanchard L."/>
            <person name="Guerin P."/>
            <person name="Fernandez B."/>
            <person name="Vacherie B."/>
            <person name="Dossat C."/>
            <person name="Jolivet E."/>
            <person name="Siguier P."/>
            <person name="Chandler M."/>
            <person name="Barakat M."/>
            <person name="Dedieu A."/>
            <person name="Barbe V."/>
            <person name="Heulin T."/>
            <person name="Sommer S."/>
            <person name="Achouak W."/>
            <person name="Armengaud J."/>
        </authorList>
    </citation>
    <scope>NUCLEOTIDE SEQUENCE [LARGE SCALE GENOMIC DNA]</scope>
    <source>
        <strain>DSM 17065 / CIP 109153 / LMG 22923 / VCD115</strain>
    </source>
</reference>
<accession>C1CXF6</accession>
<name>RL14_DEIDV</name>
<feature type="chain" id="PRO_1000214971" description="Large ribosomal subunit protein uL14">
    <location>
        <begin position="1"/>
        <end position="134"/>
    </location>
</feature>
<sequence length="134" mass="14204">MIMPQSRLDVADNSGAREIMCIRVLNSGIGGKGLTTGGGGNKRYAHVGDIIVASVKDAAPRGAVKAGDVVKAVVVRTSHAIKRADGSTIRFDKNAAVIINNQGEPRGTRVFGPVARELRDRRFMKIVSLAPEVL</sequence>
<protein>
    <recommendedName>
        <fullName evidence="1">Large ribosomal subunit protein uL14</fullName>
    </recommendedName>
    <alternativeName>
        <fullName evidence="2">50S ribosomal protein L14</fullName>
    </alternativeName>
</protein>
<comment type="function">
    <text evidence="1">Binds to 23S rRNA. Forms part of two intersubunit bridges in the 70S ribosome.</text>
</comment>
<comment type="subunit">
    <text evidence="1">Part of the 50S ribosomal subunit. Forms a cluster with proteins L3 and L19. In the 70S ribosome, L14 and L19 interact and together make contacts with the 16S rRNA in bridges B5 and B8.</text>
</comment>
<comment type="similarity">
    <text evidence="1">Belongs to the universal ribosomal protein uL14 family.</text>
</comment>
<dbReference type="EMBL" id="CP001114">
    <property type="protein sequence ID" value="ACO46873.1"/>
    <property type="molecule type" value="Genomic_DNA"/>
</dbReference>
<dbReference type="RefSeq" id="WP_012693995.1">
    <property type="nucleotide sequence ID" value="NC_012526.1"/>
</dbReference>
<dbReference type="SMR" id="C1CXF6"/>
<dbReference type="STRING" id="546414.Deide_18850"/>
<dbReference type="PaxDb" id="546414-Deide_18850"/>
<dbReference type="GeneID" id="59165582"/>
<dbReference type="KEGG" id="ddr:Deide_18850"/>
<dbReference type="eggNOG" id="COG0093">
    <property type="taxonomic scope" value="Bacteria"/>
</dbReference>
<dbReference type="HOGENOM" id="CLU_095071_2_1_0"/>
<dbReference type="OrthoDB" id="9806379at2"/>
<dbReference type="Proteomes" id="UP000002208">
    <property type="component" value="Chromosome"/>
</dbReference>
<dbReference type="GO" id="GO:0022625">
    <property type="term" value="C:cytosolic large ribosomal subunit"/>
    <property type="evidence" value="ECO:0007669"/>
    <property type="project" value="TreeGrafter"/>
</dbReference>
<dbReference type="GO" id="GO:0070180">
    <property type="term" value="F:large ribosomal subunit rRNA binding"/>
    <property type="evidence" value="ECO:0007669"/>
    <property type="project" value="TreeGrafter"/>
</dbReference>
<dbReference type="GO" id="GO:0003735">
    <property type="term" value="F:structural constituent of ribosome"/>
    <property type="evidence" value="ECO:0007669"/>
    <property type="project" value="InterPro"/>
</dbReference>
<dbReference type="GO" id="GO:0006412">
    <property type="term" value="P:translation"/>
    <property type="evidence" value="ECO:0007669"/>
    <property type="project" value="UniProtKB-UniRule"/>
</dbReference>
<dbReference type="CDD" id="cd00337">
    <property type="entry name" value="Ribosomal_uL14"/>
    <property type="match status" value="1"/>
</dbReference>
<dbReference type="FunFam" id="2.40.150.20:FF:000001">
    <property type="entry name" value="50S ribosomal protein L14"/>
    <property type="match status" value="1"/>
</dbReference>
<dbReference type="Gene3D" id="2.40.150.20">
    <property type="entry name" value="Ribosomal protein L14"/>
    <property type="match status" value="1"/>
</dbReference>
<dbReference type="HAMAP" id="MF_01367">
    <property type="entry name" value="Ribosomal_uL14"/>
    <property type="match status" value="1"/>
</dbReference>
<dbReference type="InterPro" id="IPR000218">
    <property type="entry name" value="Ribosomal_uL14"/>
</dbReference>
<dbReference type="InterPro" id="IPR005745">
    <property type="entry name" value="Ribosomal_uL14_bac-type"/>
</dbReference>
<dbReference type="InterPro" id="IPR019972">
    <property type="entry name" value="Ribosomal_uL14_CS"/>
</dbReference>
<dbReference type="InterPro" id="IPR036853">
    <property type="entry name" value="Ribosomal_uL14_sf"/>
</dbReference>
<dbReference type="NCBIfam" id="TIGR01067">
    <property type="entry name" value="rplN_bact"/>
    <property type="match status" value="1"/>
</dbReference>
<dbReference type="PANTHER" id="PTHR11761">
    <property type="entry name" value="50S/60S RIBOSOMAL PROTEIN L14/L23"/>
    <property type="match status" value="1"/>
</dbReference>
<dbReference type="PANTHER" id="PTHR11761:SF3">
    <property type="entry name" value="LARGE RIBOSOMAL SUBUNIT PROTEIN UL14M"/>
    <property type="match status" value="1"/>
</dbReference>
<dbReference type="Pfam" id="PF00238">
    <property type="entry name" value="Ribosomal_L14"/>
    <property type="match status" value="1"/>
</dbReference>
<dbReference type="SMART" id="SM01374">
    <property type="entry name" value="Ribosomal_L14"/>
    <property type="match status" value="1"/>
</dbReference>
<dbReference type="SUPFAM" id="SSF50193">
    <property type="entry name" value="Ribosomal protein L14"/>
    <property type="match status" value="1"/>
</dbReference>
<dbReference type="PROSITE" id="PS00049">
    <property type="entry name" value="RIBOSOMAL_L14"/>
    <property type="match status" value="1"/>
</dbReference>